<evidence type="ECO:0000255" key="1">
    <source>
        <dbReference type="HAMAP-Rule" id="MF_00420"/>
    </source>
</evidence>
<feature type="chain" id="PRO_1000194835" description="Phosphoribosylformylglycinamidine synthase subunit PurL">
    <location>
        <begin position="1"/>
        <end position="736"/>
    </location>
</feature>
<feature type="active site" evidence="1">
    <location>
        <position position="49"/>
    </location>
</feature>
<feature type="active site" description="Proton acceptor" evidence="1">
    <location>
        <position position="95"/>
    </location>
</feature>
<feature type="binding site" evidence="1">
    <location>
        <position position="52"/>
    </location>
    <ligand>
        <name>ATP</name>
        <dbReference type="ChEBI" id="CHEBI:30616"/>
    </ligand>
</feature>
<feature type="binding site" evidence="1">
    <location>
        <position position="91"/>
    </location>
    <ligand>
        <name>ATP</name>
        <dbReference type="ChEBI" id="CHEBI:30616"/>
    </ligand>
</feature>
<feature type="binding site" evidence="1">
    <location>
        <position position="93"/>
    </location>
    <ligand>
        <name>Mg(2+)</name>
        <dbReference type="ChEBI" id="CHEBI:18420"/>
        <label>1</label>
    </ligand>
</feature>
<feature type="binding site" evidence="1">
    <location>
        <begin position="94"/>
        <end position="97"/>
    </location>
    <ligand>
        <name>substrate</name>
    </ligand>
</feature>
<feature type="binding site" evidence="1">
    <location>
        <position position="116"/>
    </location>
    <ligand>
        <name>substrate</name>
    </ligand>
</feature>
<feature type="binding site" evidence="1">
    <location>
        <position position="117"/>
    </location>
    <ligand>
        <name>Mg(2+)</name>
        <dbReference type="ChEBI" id="CHEBI:18420"/>
        <label>2</label>
    </ligand>
</feature>
<feature type="binding site" evidence="1">
    <location>
        <position position="240"/>
    </location>
    <ligand>
        <name>substrate</name>
    </ligand>
</feature>
<feature type="binding site" evidence="1">
    <location>
        <position position="268"/>
    </location>
    <ligand>
        <name>Mg(2+)</name>
        <dbReference type="ChEBI" id="CHEBI:18420"/>
        <label>2</label>
    </ligand>
</feature>
<feature type="binding site" evidence="1">
    <location>
        <begin position="312"/>
        <end position="314"/>
    </location>
    <ligand>
        <name>substrate</name>
    </ligand>
</feature>
<feature type="binding site" evidence="1">
    <location>
        <position position="493"/>
    </location>
    <ligand>
        <name>ATP</name>
        <dbReference type="ChEBI" id="CHEBI:30616"/>
    </ligand>
</feature>
<feature type="binding site" evidence="1">
    <location>
        <position position="530"/>
    </location>
    <ligand>
        <name>ATP</name>
        <dbReference type="ChEBI" id="CHEBI:30616"/>
    </ligand>
</feature>
<feature type="binding site" evidence="1">
    <location>
        <position position="531"/>
    </location>
    <ligand>
        <name>Mg(2+)</name>
        <dbReference type="ChEBI" id="CHEBI:18420"/>
        <label>1</label>
    </ligand>
</feature>
<feature type="binding site" evidence="1">
    <location>
        <position position="533"/>
    </location>
    <ligand>
        <name>substrate</name>
    </ligand>
</feature>
<gene>
    <name evidence="1" type="primary">purL</name>
    <name type="ordered locus">Rpal_1786</name>
</gene>
<accession>B3Q7H9</accession>
<reference key="1">
    <citation type="submission" date="2008-05" db="EMBL/GenBank/DDBJ databases">
        <title>Complete sequence of Rhodopseudomonas palustris TIE-1.</title>
        <authorList>
            <consortium name="US DOE Joint Genome Institute"/>
            <person name="Lucas S."/>
            <person name="Copeland A."/>
            <person name="Lapidus A."/>
            <person name="Glavina del Rio T."/>
            <person name="Dalin E."/>
            <person name="Tice H."/>
            <person name="Pitluck S."/>
            <person name="Chain P."/>
            <person name="Malfatti S."/>
            <person name="Shin M."/>
            <person name="Vergez L."/>
            <person name="Lang D."/>
            <person name="Schmutz J."/>
            <person name="Larimer F."/>
            <person name="Land M."/>
            <person name="Hauser L."/>
            <person name="Kyrpides N."/>
            <person name="Mikhailova N."/>
            <person name="Emerson D."/>
            <person name="Newman D.K."/>
            <person name="Roden E."/>
            <person name="Richardson P."/>
        </authorList>
    </citation>
    <scope>NUCLEOTIDE SEQUENCE [LARGE SCALE GENOMIC DNA]</scope>
    <source>
        <strain>TIE-1</strain>
    </source>
</reference>
<organism>
    <name type="scientific">Rhodopseudomonas palustris (strain TIE-1)</name>
    <dbReference type="NCBI Taxonomy" id="395960"/>
    <lineage>
        <taxon>Bacteria</taxon>
        <taxon>Pseudomonadati</taxon>
        <taxon>Pseudomonadota</taxon>
        <taxon>Alphaproteobacteria</taxon>
        <taxon>Hyphomicrobiales</taxon>
        <taxon>Nitrobacteraceae</taxon>
        <taxon>Rhodopseudomonas</taxon>
    </lineage>
</organism>
<keyword id="KW-0067">ATP-binding</keyword>
<keyword id="KW-0963">Cytoplasm</keyword>
<keyword id="KW-0436">Ligase</keyword>
<keyword id="KW-0460">Magnesium</keyword>
<keyword id="KW-0479">Metal-binding</keyword>
<keyword id="KW-0547">Nucleotide-binding</keyword>
<keyword id="KW-0658">Purine biosynthesis</keyword>
<name>PURL_RHOPT</name>
<protein>
    <recommendedName>
        <fullName evidence="1">Phosphoribosylformylglycinamidine synthase subunit PurL</fullName>
        <shortName evidence="1">FGAM synthase</shortName>
        <ecNumber evidence="1">6.3.5.3</ecNumber>
    </recommendedName>
    <alternativeName>
        <fullName evidence="1">Formylglycinamide ribonucleotide amidotransferase subunit II</fullName>
        <shortName evidence="1">FGAR amidotransferase II</shortName>
        <shortName evidence="1">FGAR-AT II</shortName>
    </alternativeName>
    <alternativeName>
        <fullName evidence="1">Glutamine amidotransferase PurL</fullName>
    </alternativeName>
    <alternativeName>
        <fullName evidence="1">Phosphoribosylformylglycinamidine synthase subunit II</fullName>
    </alternativeName>
</protein>
<proteinExistence type="inferred from homology"/>
<comment type="function">
    <text evidence="1">Part of the phosphoribosylformylglycinamidine synthase complex involved in the purines biosynthetic pathway. Catalyzes the ATP-dependent conversion of formylglycinamide ribonucleotide (FGAR) and glutamine to yield formylglycinamidine ribonucleotide (FGAM) and glutamate. The FGAM synthase complex is composed of three subunits. PurQ produces an ammonia molecule by converting glutamine to glutamate. PurL transfers the ammonia molecule to FGAR to form FGAM in an ATP-dependent manner. PurS interacts with PurQ and PurL and is thought to assist in the transfer of the ammonia molecule from PurQ to PurL.</text>
</comment>
<comment type="catalytic activity">
    <reaction evidence="1">
        <text>N(2)-formyl-N(1)-(5-phospho-beta-D-ribosyl)glycinamide + L-glutamine + ATP + H2O = 2-formamido-N(1)-(5-O-phospho-beta-D-ribosyl)acetamidine + L-glutamate + ADP + phosphate + H(+)</text>
        <dbReference type="Rhea" id="RHEA:17129"/>
        <dbReference type="ChEBI" id="CHEBI:15377"/>
        <dbReference type="ChEBI" id="CHEBI:15378"/>
        <dbReference type="ChEBI" id="CHEBI:29985"/>
        <dbReference type="ChEBI" id="CHEBI:30616"/>
        <dbReference type="ChEBI" id="CHEBI:43474"/>
        <dbReference type="ChEBI" id="CHEBI:58359"/>
        <dbReference type="ChEBI" id="CHEBI:147286"/>
        <dbReference type="ChEBI" id="CHEBI:147287"/>
        <dbReference type="ChEBI" id="CHEBI:456216"/>
        <dbReference type="EC" id="6.3.5.3"/>
    </reaction>
</comment>
<comment type="pathway">
    <text evidence="1">Purine metabolism; IMP biosynthesis via de novo pathway; 5-amino-1-(5-phospho-D-ribosyl)imidazole from N(2)-formyl-N(1)-(5-phospho-D-ribosyl)glycinamide: step 1/2.</text>
</comment>
<comment type="subunit">
    <text evidence="1">Monomer. Part of the FGAM synthase complex composed of 1 PurL, 1 PurQ and 2 PurS subunits.</text>
</comment>
<comment type="subcellular location">
    <subcellularLocation>
        <location evidence="1">Cytoplasm</location>
    </subcellularLocation>
</comment>
<comment type="similarity">
    <text evidence="1">Belongs to the FGAMS family.</text>
</comment>
<dbReference type="EC" id="6.3.5.3" evidence="1"/>
<dbReference type="EMBL" id="CP001096">
    <property type="protein sequence ID" value="ACF00313.1"/>
    <property type="molecule type" value="Genomic_DNA"/>
</dbReference>
<dbReference type="RefSeq" id="WP_012495194.1">
    <property type="nucleotide sequence ID" value="NC_011004.1"/>
</dbReference>
<dbReference type="SMR" id="B3Q7H9"/>
<dbReference type="KEGG" id="rpt:Rpal_1786"/>
<dbReference type="HOGENOM" id="CLU_003100_0_1_5"/>
<dbReference type="OrthoDB" id="9804441at2"/>
<dbReference type="UniPathway" id="UPA00074">
    <property type="reaction ID" value="UER00128"/>
</dbReference>
<dbReference type="Proteomes" id="UP000001725">
    <property type="component" value="Chromosome"/>
</dbReference>
<dbReference type="GO" id="GO:0005737">
    <property type="term" value="C:cytoplasm"/>
    <property type="evidence" value="ECO:0007669"/>
    <property type="project" value="UniProtKB-SubCell"/>
</dbReference>
<dbReference type="GO" id="GO:0005524">
    <property type="term" value="F:ATP binding"/>
    <property type="evidence" value="ECO:0007669"/>
    <property type="project" value="UniProtKB-UniRule"/>
</dbReference>
<dbReference type="GO" id="GO:0000287">
    <property type="term" value="F:magnesium ion binding"/>
    <property type="evidence" value="ECO:0007669"/>
    <property type="project" value="UniProtKB-UniRule"/>
</dbReference>
<dbReference type="GO" id="GO:0004642">
    <property type="term" value="F:phosphoribosylformylglycinamidine synthase activity"/>
    <property type="evidence" value="ECO:0007669"/>
    <property type="project" value="UniProtKB-UniRule"/>
</dbReference>
<dbReference type="GO" id="GO:0006189">
    <property type="term" value="P:'de novo' IMP biosynthetic process"/>
    <property type="evidence" value="ECO:0007669"/>
    <property type="project" value="UniProtKB-UniRule"/>
</dbReference>
<dbReference type="CDD" id="cd02203">
    <property type="entry name" value="PurL_repeat1"/>
    <property type="match status" value="1"/>
</dbReference>
<dbReference type="CDD" id="cd02204">
    <property type="entry name" value="PurL_repeat2"/>
    <property type="match status" value="1"/>
</dbReference>
<dbReference type="FunFam" id="3.30.1330.10:FF:000004">
    <property type="entry name" value="Phosphoribosylformylglycinamidine synthase subunit PurL"/>
    <property type="match status" value="1"/>
</dbReference>
<dbReference type="Gene3D" id="3.90.650.10">
    <property type="entry name" value="PurM-like C-terminal domain"/>
    <property type="match status" value="2"/>
</dbReference>
<dbReference type="Gene3D" id="3.30.1330.10">
    <property type="entry name" value="PurM-like, N-terminal domain"/>
    <property type="match status" value="2"/>
</dbReference>
<dbReference type="HAMAP" id="MF_00420">
    <property type="entry name" value="PurL_2"/>
    <property type="match status" value="1"/>
</dbReference>
<dbReference type="InterPro" id="IPR010074">
    <property type="entry name" value="PRibForGlyAmidine_synth_PurL"/>
</dbReference>
<dbReference type="InterPro" id="IPR041609">
    <property type="entry name" value="PurL_linker"/>
</dbReference>
<dbReference type="InterPro" id="IPR010918">
    <property type="entry name" value="PurM-like_C_dom"/>
</dbReference>
<dbReference type="InterPro" id="IPR036676">
    <property type="entry name" value="PurM-like_C_sf"/>
</dbReference>
<dbReference type="InterPro" id="IPR016188">
    <property type="entry name" value="PurM-like_N"/>
</dbReference>
<dbReference type="InterPro" id="IPR036921">
    <property type="entry name" value="PurM-like_N_sf"/>
</dbReference>
<dbReference type="NCBIfam" id="TIGR01736">
    <property type="entry name" value="FGAM_synth_II"/>
    <property type="match status" value="1"/>
</dbReference>
<dbReference type="NCBIfam" id="NF002290">
    <property type="entry name" value="PRK01213.1"/>
    <property type="match status" value="1"/>
</dbReference>
<dbReference type="PANTHER" id="PTHR43555">
    <property type="entry name" value="PHOSPHORIBOSYLFORMYLGLYCINAMIDINE SYNTHASE SUBUNIT PURL"/>
    <property type="match status" value="1"/>
</dbReference>
<dbReference type="PANTHER" id="PTHR43555:SF1">
    <property type="entry name" value="PHOSPHORIBOSYLFORMYLGLYCINAMIDINE SYNTHASE SUBUNIT PURL"/>
    <property type="match status" value="1"/>
</dbReference>
<dbReference type="Pfam" id="PF00586">
    <property type="entry name" value="AIRS"/>
    <property type="match status" value="2"/>
</dbReference>
<dbReference type="Pfam" id="PF02769">
    <property type="entry name" value="AIRS_C"/>
    <property type="match status" value="2"/>
</dbReference>
<dbReference type="Pfam" id="PF18072">
    <property type="entry name" value="FGAR-AT_linker"/>
    <property type="match status" value="1"/>
</dbReference>
<dbReference type="PIRSF" id="PIRSF001587">
    <property type="entry name" value="FGAM_synthase_II"/>
    <property type="match status" value="1"/>
</dbReference>
<dbReference type="SUPFAM" id="SSF56042">
    <property type="entry name" value="PurM C-terminal domain-like"/>
    <property type="match status" value="2"/>
</dbReference>
<dbReference type="SUPFAM" id="SSF55326">
    <property type="entry name" value="PurM N-terminal domain-like"/>
    <property type="match status" value="2"/>
</dbReference>
<sequence>MSAPEPKITPELIASHGLKPDEYQRILDLIGREPTFTELGIFSAMWNEHCSYKSSRIHLKGLPTKAPWVLQGPGENAGVIDIGDNQAVVFKMESHNHPSYIEPYQGATTGVGGILRDVFTMGARPIACLNALSFGDPSHPKTRHLVSGVVAGVGGYGNSFGVPTVGGQTRFHTRYDGNILVNAMAVGLADADKIFLAAASGVGMPIVYLGSKTGRDGMGGATMASAEFDEGSDEKRPTVQVGDPFAEKLLLEACLEIMAKDCVIAIQDMGAAGLTCSAVEMGAKGDLGVELDLDAVPTRETGMTAYEMMLSESQERMLMVLKPEKEKEAEEIFKKWGLDFAIVGYTTPTKRFVVKHGGQVKADLPIKELGDEAPLYDRPWVESPKLPVIHARDINAPMGAAEALEKLLATPDLCSKRWVWEQYDHVIGGNTVQRPGGDAAVVRIEDGPKGLALTVDVTPRYCEADPFEGGKQAVAEAYRNITAVGGKPLAITDNLNFGNPERPEIMGQLVGCLKGISEACIALDSPIVSGNVSLYNETSGRGILPTPSIGGVGVLDDFTKSATLAFKAEGEAILLIGETKGWLGQSVYLREICGREEGAPPPVDLAVEKRHGDVVRGMIHAGTATAVHDVSDGGLLVAIAEMAIAGNIGASLDAPPGETVSHAWWFGEDQARYVVTVKEADLLAVKTKLKTIGVPCTQIGVTGGHALKIEGERTVDLKALRHAHEHWLPDYMGGKN</sequence>